<evidence type="ECO:0000255" key="1">
    <source>
        <dbReference type="HAMAP-Rule" id="MF_00443"/>
    </source>
</evidence>
<comment type="function">
    <text evidence="1">Catalyzes the rearrangement of 1-deoxy-D-xylulose 5-phosphate (DXP) to produce the thiazole phosphate moiety of thiamine. Sulfur is provided by the thiocarboxylate moiety of the carrier protein ThiS. In vitro, sulfur can be provided by H(2)S.</text>
</comment>
<comment type="catalytic activity">
    <reaction evidence="1">
        <text>[ThiS sulfur-carrier protein]-C-terminal-Gly-aminoethanethioate + 2-iminoacetate + 1-deoxy-D-xylulose 5-phosphate = [ThiS sulfur-carrier protein]-C-terminal Gly-Gly + 2-[(2R,5Z)-2-carboxy-4-methylthiazol-5(2H)-ylidene]ethyl phosphate + 2 H2O + H(+)</text>
        <dbReference type="Rhea" id="RHEA:26297"/>
        <dbReference type="Rhea" id="RHEA-COMP:12909"/>
        <dbReference type="Rhea" id="RHEA-COMP:19908"/>
        <dbReference type="ChEBI" id="CHEBI:15377"/>
        <dbReference type="ChEBI" id="CHEBI:15378"/>
        <dbReference type="ChEBI" id="CHEBI:57792"/>
        <dbReference type="ChEBI" id="CHEBI:62899"/>
        <dbReference type="ChEBI" id="CHEBI:77846"/>
        <dbReference type="ChEBI" id="CHEBI:90778"/>
        <dbReference type="ChEBI" id="CHEBI:232372"/>
        <dbReference type="EC" id="2.8.1.10"/>
    </reaction>
</comment>
<comment type="pathway">
    <text evidence="1">Cofactor biosynthesis; thiamine diphosphate biosynthesis.</text>
</comment>
<comment type="subunit">
    <text evidence="1">Homotetramer. Forms heterodimers with either ThiH or ThiS.</text>
</comment>
<comment type="subcellular location">
    <subcellularLocation>
        <location evidence="1">Cytoplasm</location>
    </subcellularLocation>
</comment>
<comment type="similarity">
    <text evidence="1">Belongs to the ThiG family.</text>
</comment>
<gene>
    <name evidence="1" type="primary">thiG</name>
    <name type="ordered locus">MADE_1000700</name>
</gene>
<accession>B4S2W0</accession>
<accession>F2G2S9</accession>
<name>THIG_ALTMD</name>
<proteinExistence type="inferred from homology"/>
<organism>
    <name type="scientific">Alteromonas mediterranea (strain DSM 17117 / CIP 110805 / LMG 28347 / Deep ecotype)</name>
    <dbReference type="NCBI Taxonomy" id="1774373"/>
    <lineage>
        <taxon>Bacteria</taxon>
        <taxon>Pseudomonadati</taxon>
        <taxon>Pseudomonadota</taxon>
        <taxon>Gammaproteobacteria</taxon>
        <taxon>Alteromonadales</taxon>
        <taxon>Alteromonadaceae</taxon>
        <taxon>Alteromonas/Salinimonas group</taxon>
        <taxon>Alteromonas</taxon>
    </lineage>
</organism>
<reference key="1">
    <citation type="journal article" date="2008" name="ISME J.">
        <title>Comparative genomics of two ecotypes of the marine planktonic copiotroph Alteromonas macleodii suggests alternative lifestyles associated with different kinds of particulate organic matter.</title>
        <authorList>
            <person name="Ivars-Martinez E."/>
            <person name="Martin-Cuadrado A.-B."/>
            <person name="D'Auria G."/>
            <person name="Mira A."/>
            <person name="Ferriera S."/>
            <person name="Johnson J."/>
            <person name="Friedman R."/>
            <person name="Rodriguez-Valera F."/>
        </authorList>
    </citation>
    <scope>NUCLEOTIDE SEQUENCE [LARGE SCALE GENOMIC DNA]</scope>
    <source>
        <strain>DSM 17117 / CIP 110805 / LMG 28347 / Deep ecotype</strain>
    </source>
</reference>
<protein>
    <recommendedName>
        <fullName evidence="1">Thiazole synthase</fullName>
        <ecNumber evidence="1">2.8.1.10</ecNumber>
    </recommendedName>
</protein>
<keyword id="KW-0963">Cytoplasm</keyword>
<keyword id="KW-0704">Schiff base</keyword>
<keyword id="KW-0784">Thiamine biosynthesis</keyword>
<keyword id="KW-0808">Transferase</keyword>
<sequence>MLTLANHTFSSRLLTGTGKFSNATTMKSAVSAAQSNIVTLAMKRVASNNAQDETLKALRELGVTLLPNTSGAKNAQEAVFAAELSYEALGSQWVKLEIHPDQRYLLPDPIETLRAAETLVKKGFNVLPYCGADPVLCKRLEDVGCAAVMPLGAPIGSNQGLQTAPFLKIIVEQASIPVIVDAGIGKPSEAMAVMEMGVDAVLVNTAIATARNPVAMAKAFASAVETGRCAFEAGLGATSNVALASSPLTAFLEPTV</sequence>
<dbReference type="EC" id="2.8.1.10" evidence="1"/>
<dbReference type="EMBL" id="CP001103">
    <property type="protein sequence ID" value="AEA96289.1"/>
    <property type="molecule type" value="Genomic_DNA"/>
</dbReference>
<dbReference type="RefSeq" id="WP_012516663.1">
    <property type="nucleotide sequence ID" value="NC_011138.3"/>
</dbReference>
<dbReference type="SMR" id="B4S2W0"/>
<dbReference type="KEGG" id="amc:MADE_1000700"/>
<dbReference type="PATRIC" id="fig|314275.5.peg.145"/>
<dbReference type="HOGENOM" id="CLU_062233_1_0_6"/>
<dbReference type="UniPathway" id="UPA00060"/>
<dbReference type="Proteomes" id="UP000001870">
    <property type="component" value="Chromosome"/>
</dbReference>
<dbReference type="GO" id="GO:0005737">
    <property type="term" value="C:cytoplasm"/>
    <property type="evidence" value="ECO:0007669"/>
    <property type="project" value="UniProtKB-SubCell"/>
</dbReference>
<dbReference type="GO" id="GO:1990107">
    <property type="term" value="F:thiazole synthase activity"/>
    <property type="evidence" value="ECO:0007669"/>
    <property type="project" value="UniProtKB-EC"/>
</dbReference>
<dbReference type="GO" id="GO:0009229">
    <property type="term" value="P:thiamine diphosphate biosynthetic process"/>
    <property type="evidence" value="ECO:0007669"/>
    <property type="project" value="UniProtKB-UniRule"/>
</dbReference>
<dbReference type="CDD" id="cd04728">
    <property type="entry name" value="ThiG"/>
    <property type="match status" value="1"/>
</dbReference>
<dbReference type="FunFam" id="3.20.20.70:FF:000049">
    <property type="entry name" value="Thiazole synthase"/>
    <property type="match status" value="1"/>
</dbReference>
<dbReference type="Gene3D" id="3.20.20.70">
    <property type="entry name" value="Aldolase class I"/>
    <property type="match status" value="1"/>
</dbReference>
<dbReference type="HAMAP" id="MF_00443">
    <property type="entry name" value="ThiG"/>
    <property type="match status" value="1"/>
</dbReference>
<dbReference type="InterPro" id="IPR013785">
    <property type="entry name" value="Aldolase_TIM"/>
</dbReference>
<dbReference type="InterPro" id="IPR033983">
    <property type="entry name" value="Thiazole_synthase_ThiG"/>
</dbReference>
<dbReference type="InterPro" id="IPR008867">
    <property type="entry name" value="ThiG"/>
</dbReference>
<dbReference type="PANTHER" id="PTHR34266">
    <property type="entry name" value="THIAZOLE SYNTHASE"/>
    <property type="match status" value="1"/>
</dbReference>
<dbReference type="PANTHER" id="PTHR34266:SF2">
    <property type="entry name" value="THIAZOLE SYNTHASE"/>
    <property type="match status" value="1"/>
</dbReference>
<dbReference type="Pfam" id="PF05690">
    <property type="entry name" value="ThiG"/>
    <property type="match status" value="1"/>
</dbReference>
<dbReference type="SUPFAM" id="SSF110399">
    <property type="entry name" value="ThiG-like"/>
    <property type="match status" value="1"/>
</dbReference>
<feature type="chain" id="PRO_1000124596" description="Thiazole synthase">
    <location>
        <begin position="1"/>
        <end position="256"/>
    </location>
</feature>
<feature type="active site" description="Schiff-base intermediate with DXP" evidence="1">
    <location>
        <position position="95"/>
    </location>
</feature>
<feature type="binding site" evidence="1">
    <location>
        <position position="156"/>
    </location>
    <ligand>
        <name>1-deoxy-D-xylulose 5-phosphate</name>
        <dbReference type="ChEBI" id="CHEBI:57792"/>
    </ligand>
</feature>
<feature type="binding site" evidence="1">
    <location>
        <begin position="182"/>
        <end position="183"/>
    </location>
    <ligand>
        <name>1-deoxy-D-xylulose 5-phosphate</name>
        <dbReference type="ChEBI" id="CHEBI:57792"/>
    </ligand>
</feature>
<feature type="binding site" evidence="1">
    <location>
        <begin position="204"/>
        <end position="205"/>
    </location>
    <ligand>
        <name>1-deoxy-D-xylulose 5-phosphate</name>
        <dbReference type="ChEBI" id="CHEBI:57792"/>
    </ligand>
</feature>